<proteinExistence type="inferred from homology"/>
<organism>
    <name type="scientific">Mycobacterium tuberculosis (strain CDC 1551 / Oshkosh)</name>
    <dbReference type="NCBI Taxonomy" id="83331"/>
    <lineage>
        <taxon>Bacteria</taxon>
        <taxon>Bacillati</taxon>
        <taxon>Actinomycetota</taxon>
        <taxon>Actinomycetes</taxon>
        <taxon>Mycobacteriales</taxon>
        <taxon>Mycobacteriaceae</taxon>
        <taxon>Mycobacterium</taxon>
        <taxon>Mycobacterium tuberculosis complex</taxon>
    </lineage>
</organism>
<sequence length="540" mass="56629">MLGNAMVEACPAEGDAPVPITPAGRPRSGQRSYPDRLDVGLLRTAGVCVLASVMAHVDVTVVSVAQRTFVADFGSTQAVVAWTMTGYMLALATVIPTAGWAADRFGTRRLFMGSVLAFTLGSLLCAVAPNILLLIIFRVVQGFGGGMLTPVSFAILAREAGPKRLGRVMAVVGIPMLLGPVGGPILGGWLIGAYGWRWIFLVNLPVGLSALVLAAIVFPRDRPAASENFDYMGLLLLSPGLATFLFGVSSSPARGTMADRHVLIPAITGLALIAAFVAHSWYRTEHPLIDMRLFQNRAVAQANMTMTVLSLGLFGSFLLLPSYLQQVLHQSPMQSGVHIIPQGLGAMLAMPIAGAMMDRRGPAKIVLVGIMLIAAGLGTFAFGVARQADYLPILPTGLAIMGMGMVCSMMPLSGAAVQTLAPHQIARGSTLISVNQQVGGSIGTALMSVLLTYQFNHSEIIATAKKVALTPESGAGRGAAVDPSSLPRQTNFAAQLLHDLSHAYAVVFVIATALVVSTLIPAAFLPKQQASHRRAPLLSA</sequence>
<comment type="subcellular location">
    <subcellularLocation>
        <location evidence="2">Cell membrane</location>
        <topology evidence="2">Multi-pass membrane protein</topology>
    </subcellularLocation>
</comment>
<comment type="similarity">
    <text evidence="2">Belongs to the major facilitator superfamily. EmrB family.</text>
</comment>
<comment type="sequence caution" evidence="2">
    <conflict type="erroneous initiation">
        <sequence resource="EMBL-CDS" id="AAK45049"/>
    </conflict>
</comment>
<dbReference type="EMBL" id="AE000516">
    <property type="protein sequence ID" value="AAK45049.1"/>
    <property type="status" value="ALT_INIT"/>
    <property type="molecule type" value="Genomic_DNA"/>
</dbReference>
<dbReference type="PIR" id="B70709">
    <property type="entry name" value="B70709"/>
</dbReference>
<dbReference type="RefSeq" id="WP_023641775.1">
    <property type="nucleotide sequence ID" value="NZ_KK341227.1"/>
</dbReference>
<dbReference type="SMR" id="P9WG88"/>
<dbReference type="KEGG" id="mtc:MT0807"/>
<dbReference type="PATRIC" id="fig|83331.31.peg.867"/>
<dbReference type="HOGENOM" id="CLU_000960_28_0_11"/>
<dbReference type="Proteomes" id="UP000001020">
    <property type="component" value="Chromosome"/>
</dbReference>
<dbReference type="GO" id="GO:0005886">
    <property type="term" value="C:plasma membrane"/>
    <property type="evidence" value="ECO:0007669"/>
    <property type="project" value="UniProtKB-SubCell"/>
</dbReference>
<dbReference type="GO" id="GO:0022857">
    <property type="term" value="F:transmembrane transporter activity"/>
    <property type="evidence" value="ECO:0007669"/>
    <property type="project" value="InterPro"/>
</dbReference>
<dbReference type="CDD" id="cd17503">
    <property type="entry name" value="MFS_LmrB_MDR_like"/>
    <property type="match status" value="1"/>
</dbReference>
<dbReference type="FunFam" id="1.20.1720.10:FF:000029">
    <property type="entry name" value="Multidrug resistance membrane efflux protein emrB"/>
    <property type="match status" value="1"/>
</dbReference>
<dbReference type="Gene3D" id="1.20.1250.20">
    <property type="entry name" value="MFS general substrate transporter like domains"/>
    <property type="match status" value="1"/>
</dbReference>
<dbReference type="Gene3D" id="1.20.1720.10">
    <property type="entry name" value="Multidrug resistance protein D"/>
    <property type="match status" value="1"/>
</dbReference>
<dbReference type="InterPro" id="IPR004638">
    <property type="entry name" value="EmrB-like"/>
</dbReference>
<dbReference type="InterPro" id="IPR011701">
    <property type="entry name" value="MFS"/>
</dbReference>
<dbReference type="InterPro" id="IPR020846">
    <property type="entry name" value="MFS_dom"/>
</dbReference>
<dbReference type="InterPro" id="IPR036259">
    <property type="entry name" value="MFS_trans_sf"/>
</dbReference>
<dbReference type="NCBIfam" id="TIGR00711">
    <property type="entry name" value="efflux_EmrB"/>
    <property type="match status" value="1"/>
</dbReference>
<dbReference type="PANTHER" id="PTHR42718:SF46">
    <property type="entry name" value="BLR6921 PROTEIN"/>
    <property type="match status" value="1"/>
</dbReference>
<dbReference type="PANTHER" id="PTHR42718">
    <property type="entry name" value="MAJOR FACILITATOR SUPERFAMILY MULTIDRUG TRANSPORTER MFSC"/>
    <property type="match status" value="1"/>
</dbReference>
<dbReference type="Pfam" id="PF07690">
    <property type="entry name" value="MFS_1"/>
    <property type="match status" value="1"/>
</dbReference>
<dbReference type="SUPFAM" id="SSF103473">
    <property type="entry name" value="MFS general substrate transporter"/>
    <property type="match status" value="1"/>
</dbReference>
<dbReference type="PROSITE" id="PS50850">
    <property type="entry name" value="MFS"/>
    <property type="match status" value="1"/>
</dbReference>
<accession>P9WG88</accession>
<accession>L0T4Q5</accession>
<accession>P71836</accession>
<accession>Q8VKE2</accession>
<protein>
    <recommendedName>
        <fullName>Multidrug resistance protein B homolog</fullName>
    </recommendedName>
</protein>
<keyword id="KW-1003">Cell membrane</keyword>
<keyword id="KW-0472">Membrane</keyword>
<keyword id="KW-1185">Reference proteome</keyword>
<keyword id="KW-0812">Transmembrane</keyword>
<keyword id="KW-1133">Transmembrane helix</keyword>
<keyword id="KW-0813">Transport</keyword>
<evidence type="ECO:0000255" key="1"/>
<evidence type="ECO:0000305" key="2"/>
<gene>
    <name type="primary">emrB</name>
    <name type="ordered locus">MT0807</name>
</gene>
<feature type="chain" id="PRO_0000428404" description="Multidrug resistance protein B homolog">
    <location>
        <begin position="1"/>
        <end position="540"/>
    </location>
</feature>
<feature type="transmembrane region" description="Helical" evidence="1">
    <location>
        <begin position="45"/>
        <end position="65"/>
    </location>
</feature>
<feature type="transmembrane region" description="Helical" evidence="1">
    <location>
        <begin position="78"/>
        <end position="98"/>
    </location>
</feature>
<feature type="transmembrane region" description="Helical" evidence="1">
    <location>
        <begin position="117"/>
        <end position="137"/>
    </location>
</feature>
<feature type="transmembrane region" description="Helical" evidence="1">
    <location>
        <begin position="171"/>
        <end position="191"/>
    </location>
</feature>
<feature type="transmembrane region" description="Helical" evidence="1">
    <location>
        <begin position="198"/>
        <end position="218"/>
    </location>
</feature>
<feature type="transmembrane region" description="Helical" evidence="1">
    <location>
        <begin position="229"/>
        <end position="249"/>
    </location>
</feature>
<feature type="transmembrane region" description="Helical" evidence="1">
    <location>
        <begin position="262"/>
        <end position="282"/>
    </location>
</feature>
<feature type="transmembrane region" description="Helical" evidence="1">
    <location>
        <begin position="304"/>
        <end position="324"/>
    </location>
</feature>
<feature type="transmembrane region" description="Helical" evidence="1">
    <location>
        <begin position="337"/>
        <end position="357"/>
    </location>
</feature>
<feature type="transmembrane region" description="Helical" evidence="1">
    <location>
        <begin position="365"/>
        <end position="385"/>
    </location>
</feature>
<feature type="transmembrane region" description="Helical" evidence="1">
    <location>
        <begin position="390"/>
        <end position="410"/>
    </location>
</feature>
<feature type="transmembrane region" description="Helical" evidence="1">
    <location>
        <begin position="431"/>
        <end position="451"/>
    </location>
</feature>
<feature type="transmembrane region" description="Helical" evidence="1">
    <location>
        <begin position="505"/>
        <end position="525"/>
    </location>
</feature>
<reference key="1">
    <citation type="journal article" date="2002" name="J. Bacteriol.">
        <title>Whole-genome comparison of Mycobacterium tuberculosis clinical and laboratory strains.</title>
        <authorList>
            <person name="Fleischmann R.D."/>
            <person name="Alland D."/>
            <person name="Eisen J.A."/>
            <person name="Carpenter L."/>
            <person name="White O."/>
            <person name="Peterson J.D."/>
            <person name="DeBoy R.T."/>
            <person name="Dodson R.J."/>
            <person name="Gwinn M.L."/>
            <person name="Haft D.H."/>
            <person name="Hickey E.K."/>
            <person name="Kolonay J.F."/>
            <person name="Nelson W.C."/>
            <person name="Umayam L.A."/>
            <person name="Ermolaeva M.D."/>
            <person name="Salzberg S.L."/>
            <person name="Delcher A."/>
            <person name="Utterback T.R."/>
            <person name="Weidman J.F."/>
            <person name="Khouri H.M."/>
            <person name="Gill J."/>
            <person name="Mikula A."/>
            <person name="Bishai W."/>
            <person name="Jacobs W.R. Jr."/>
            <person name="Venter J.C."/>
            <person name="Fraser C.M."/>
        </authorList>
    </citation>
    <scope>NUCLEOTIDE SEQUENCE [LARGE SCALE GENOMIC DNA]</scope>
    <source>
        <strain>CDC 1551 / Oshkosh</strain>
    </source>
</reference>
<name>EMRB_MYCTO</name>